<reference key="1">
    <citation type="submission" date="2006-03" db="EMBL/GenBank/DDBJ databases">
        <title>Complete sequence of Rhodopseudomonas palustris BisB18.</title>
        <authorList>
            <consortium name="US DOE Joint Genome Institute"/>
            <person name="Copeland A."/>
            <person name="Lucas S."/>
            <person name="Lapidus A."/>
            <person name="Barry K."/>
            <person name="Detter J.C."/>
            <person name="Glavina del Rio T."/>
            <person name="Hammon N."/>
            <person name="Israni S."/>
            <person name="Dalin E."/>
            <person name="Tice H."/>
            <person name="Pitluck S."/>
            <person name="Chain P."/>
            <person name="Malfatti S."/>
            <person name="Shin M."/>
            <person name="Vergez L."/>
            <person name="Schmutz J."/>
            <person name="Larimer F."/>
            <person name="Land M."/>
            <person name="Hauser L."/>
            <person name="Pelletier D.A."/>
            <person name="Kyrpides N."/>
            <person name="Anderson I."/>
            <person name="Oda Y."/>
            <person name="Harwood C.S."/>
            <person name="Richardson P."/>
        </authorList>
    </citation>
    <scope>NUCLEOTIDE SEQUENCE [LARGE SCALE GENOMIC DNA]</scope>
    <source>
        <strain>BisB18</strain>
    </source>
</reference>
<protein>
    <recommendedName>
        <fullName evidence="1">Acetyl-coenzyme A carboxylase carboxyl transferase subunit beta</fullName>
        <shortName evidence="1">ACCase subunit beta</shortName>
        <shortName evidence="1">Acetyl-CoA carboxylase carboxyltransferase subunit beta</shortName>
        <ecNumber evidence="1">2.1.3.15</ecNumber>
    </recommendedName>
</protein>
<accession>Q21CC1</accession>
<sequence>MNWLTNVVRPKIRNILRRETPENLWIKCPDSGHLVFYKDVEANQFVIPGSNYHMRMGAAARLKSIFDNETWYDIALPEVTPDPLKFRDERKYVDRIKDARAKTGMNDAIKVGYGKLEGGAVVVAVQDFDFMGGSLGMAAGEAIVRGIELAVEKQSPFILFAASGGARMQEGILSLMQMPRTTVGVQMLRDAKLPYIVVLTNPTTGGVTASYAMLGDVQIAEPGALIGFAGARVIEQTIREKLPEGFQRAEYLKEHGMIDMVVHRHDLKATLARLCRLLTKAPMPEVIVESEPEPEPEPVVAEIIPPTSDLPVSAPAPAPVAAQTPAPAAPSA</sequence>
<feature type="chain" id="PRO_0000389835" description="Acetyl-coenzyme A carboxylase carboxyl transferase subunit beta">
    <location>
        <begin position="1"/>
        <end position="332"/>
    </location>
</feature>
<feature type="domain" description="CoA carboxyltransferase N-terminal" evidence="2">
    <location>
        <begin position="24"/>
        <end position="293"/>
    </location>
</feature>
<feature type="region of interest" description="Disordered" evidence="3">
    <location>
        <begin position="288"/>
        <end position="332"/>
    </location>
</feature>
<feature type="compositionally biased region" description="Low complexity" evidence="3">
    <location>
        <begin position="298"/>
        <end position="332"/>
    </location>
</feature>
<comment type="function">
    <text evidence="1">Component of the acetyl coenzyme A carboxylase (ACC) complex. Biotin carboxylase (BC) catalyzes the carboxylation of biotin on its carrier protein (BCCP) and then the CO(2) group is transferred by the transcarboxylase to acetyl-CoA to form malonyl-CoA.</text>
</comment>
<comment type="catalytic activity">
    <reaction evidence="1">
        <text>N(6)-carboxybiotinyl-L-lysyl-[protein] + acetyl-CoA = N(6)-biotinyl-L-lysyl-[protein] + malonyl-CoA</text>
        <dbReference type="Rhea" id="RHEA:54728"/>
        <dbReference type="Rhea" id="RHEA-COMP:10505"/>
        <dbReference type="Rhea" id="RHEA-COMP:10506"/>
        <dbReference type="ChEBI" id="CHEBI:57288"/>
        <dbReference type="ChEBI" id="CHEBI:57384"/>
        <dbReference type="ChEBI" id="CHEBI:83144"/>
        <dbReference type="ChEBI" id="CHEBI:83145"/>
        <dbReference type="EC" id="2.1.3.15"/>
    </reaction>
</comment>
<comment type="pathway">
    <text evidence="1">Lipid metabolism; malonyl-CoA biosynthesis; malonyl-CoA from acetyl-CoA: step 1/1.</text>
</comment>
<comment type="subunit">
    <text evidence="1">Acetyl-CoA carboxylase is a heterohexamer composed of biotin carboxyl carrier protein (AccB), biotin carboxylase (AccC) and two subunits each of ACCase subunit alpha (AccA) and ACCase subunit beta (AccD).</text>
</comment>
<comment type="subcellular location">
    <subcellularLocation>
        <location evidence="1">Cytoplasm</location>
    </subcellularLocation>
</comment>
<comment type="similarity">
    <text evidence="1">Belongs to the AccD/PCCB family.</text>
</comment>
<dbReference type="EC" id="2.1.3.15" evidence="1"/>
<dbReference type="EMBL" id="CP000301">
    <property type="protein sequence ID" value="ABD85965.1"/>
    <property type="molecule type" value="Genomic_DNA"/>
</dbReference>
<dbReference type="SMR" id="Q21CC1"/>
<dbReference type="STRING" id="316056.RPC_0390"/>
<dbReference type="KEGG" id="rpc:RPC_0390"/>
<dbReference type="eggNOG" id="COG0777">
    <property type="taxonomic scope" value="Bacteria"/>
</dbReference>
<dbReference type="HOGENOM" id="CLU_015486_1_0_5"/>
<dbReference type="OrthoDB" id="9772975at2"/>
<dbReference type="UniPathway" id="UPA00655">
    <property type="reaction ID" value="UER00711"/>
</dbReference>
<dbReference type="GO" id="GO:0009329">
    <property type="term" value="C:acetate CoA-transferase complex"/>
    <property type="evidence" value="ECO:0007669"/>
    <property type="project" value="TreeGrafter"/>
</dbReference>
<dbReference type="GO" id="GO:0003989">
    <property type="term" value="F:acetyl-CoA carboxylase activity"/>
    <property type="evidence" value="ECO:0007669"/>
    <property type="project" value="InterPro"/>
</dbReference>
<dbReference type="GO" id="GO:0005524">
    <property type="term" value="F:ATP binding"/>
    <property type="evidence" value="ECO:0007669"/>
    <property type="project" value="UniProtKB-KW"/>
</dbReference>
<dbReference type="GO" id="GO:0016743">
    <property type="term" value="F:carboxyl- or carbamoyltransferase activity"/>
    <property type="evidence" value="ECO:0007669"/>
    <property type="project" value="UniProtKB-UniRule"/>
</dbReference>
<dbReference type="GO" id="GO:0006633">
    <property type="term" value="P:fatty acid biosynthetic process"/>
    <property type="evidence" value="ECO:0007669"/>
    <property type="project" value="UniProtKB-KW"/>
</dbReference>
<dbReference type="GO" id="GO:2001295">
    <property type="term" value="P:malonyl-CoA biosynthetic process"/>
    <property type="evidence" value="ECO:0007669"/>
    <property type="project" value="UniProtKB-UniRule"/>
</dbReference>
<dbReference type="Gene3D" id="3.90.226.10">
    <property type="entry name" value="2-enoyl-CoA Hydratase, Chain A, domain 1"/>
    <property type="match status" value="1"/>
</dbReference>
<dbReference type="HAMAP" id="MF_01395">
    <property type="entry name" value="AcetylCoA_CT_beta"/>
    <property type="match status" value="1"/>
</dbReference>
<dbReference type="InterPro" id="IPR034733">
    <property type="entry name" value="AcCoA_carboxyl_beta"/>
</dbReference>
<dbReference type="InterPro" id="IPR000438">
    <property type="entry name" value="Acetyl_CoA_COase_Trfase_b_su"/>
</dbReference>
<dbReference type="InterPro" id="IPR029045">
    <property type="entry name" value="ClpP/crotonase-like_dom_sf"/>
</dbReference>
<dbReference type="InterPro" id="IPR011762">
    <property type="entry name" value="COA_CT_N"/>
</dbReference>
<dbReference type="NCBIfam" id="TIGR00515">
    <property type="entry name" value="accD"/>
    <property type="match status" value="1"/>
</dbReference>
<dbReference type="PANTHER" id="PTHR42995">
    <property type="entry name" value="ACETYL-COENZYME A CARBOXYLASE CARBOXYL TRANSFERASE SUBUNIT BETA, CHLOROPLASTIC"/>
    <property type="match status" value="1"/>
</dbReference>
<dbReference type="PANTHER" id="PTHR42995:SF5">
    <property type="entry name" value="ACETYL-COENZYME A CARBOXYLASE CARBOXYL TRANSFERASE SUBUNIT BETA, CHLOROPLASTIC"/>
    <property type="match status" value="1"/>
</dbReference>
<dbReference type="Pfam" id="PF01039">
    <property type="entry name" value="Carboxyl_trans"/>
    <property type="match status" value="1"/>
</dbReference>
<dbReference type="PRINTS" id="PR01070">
    <property type="entry name" value="ACCCTRFRASEB"/>
</dbReference>
<dbReference type="SUPFAM" id="SSF52096">
    <property type="entry name" value="ClpP/crotonase"/>
    <property type="match status" value="1"/>
</dbReference>
<dbReference type="PROSITE" id="PS50980">
    <property type="entry name" value="COA_CT_NTER"/>
    <property type="match status" value="1"/>
</dbReference>
<evidence type="ECO:0000255" key="1">
    <source>
        <dbReference type="HAMAP-Rule" id="MF_01395"/>
    </source>
</evidence>
<evidence type="ECO:0000255" key="2">
    <source>
        <dbReference type="PROSITE-ProRule" id="PRU01136"/>
    </source>
</evidence>
<evidence type="ECO:0000256" key="3">
    <source>
        <dbReference type="SAM" id="MobiDB-lite"/>
    </source>
</evidence>
<organism>
    <name type="scientific">Rhodopseudomonas palustris (strain BisB18)</name>
    <dbReference type="NCBI Taxonomy" id="316056"/>
    <lineage>
        <taxon>Bacteria</taxon>
        <taxon>Pseudomonadati</taxon>
        <taxon>Pseudomonadota</taxon>
        <taxon>Alphaproteobacteria</taxon>
        <taxon>Hyphomicrobiales</taxon>
        <taxon>Nitrobacteraceae</taxon>
        <taxon>Rhodopseudomonas</taxon>
    </lineage>
</organism>
<name>ACCD_RHOPB</name>
<keyword id="KW-0067">ATP-binding</keyword>
<keyword id="KW-0963">Cytoplasm</keyword>
<keyword id="KW-0275">Fatty acid biosynthesis</keyword>
<keyword id="KW-0276">Fatty acid metabolism</keyword>
<keyword id="KW-0444">Lipid biosynthesis</keyword>
<keyword id="KW-0443">Lipid metabolism</keyword>
<keyword id="KW-0547">Nucleotide-binding</keyword>
<keyword id="KW-0808">Transferase</keyword>
<gene>
    <name evidence="1" type="primary">accD</name>
    <name type="ordered locus">RPC_0390</name>
</gene>
<proteinExistence type="inferred from homology"/>